<dbReference type="EC" id="4.2.3.4" evidence="1"/>
<dbReference type="EC" id="2.5.1.19" evidence="1"/>
<dbReference type="EC" id="2.7.1.71" evidence="1"/>
<dbReference type="EC" id="4.2.1.10" evidence="1"/>
<dbReference type="EC" id="1.1.1.25" evidence="1"/>
<dbReference type="EMBL" id="AAYY01000018">
    <property type="protein sequence ID" value="EDP41608.1"/>
    <property type="molecule type" value="Genomic_DNA"/>
</dbReference>
<dbReference type="RefSeq" id="XP_001728822.1">
    <property type="nucleotide sequence ID" value="XM_001728770.1"/>
</dbReference>
<dbReference type="SMR" id="A8QCB2"/>
<dbReference type="FunCoup" id="A8QCB2">
    <property type="interactions" value="98"/>
</dbReference>
<dbReference type="STRING" id="425265.A8QCB2"/>
<dbReference type="GeneID" id="5853128"/>
<dbReference type="KEGG" id="mgl:MGL_3989"/>
<dbReference type="VEuPathDB" id="FungiDB:MGL_3989"/>
<dbReference type="InParanoid" id="A8QCB2"/>
<dbReference type="OMA" id="SWANMSW"/>
<dbReference type="OrthoDB" id="197068at2759"/>
<dbReference type="UniPathway" id="UPA00053">
    <property type="reaction ID" value="UER00085"/>
</dbReference>
<dbReference type="UniPathway" id="UPA00053">
    <property type="reaction ID" value="UER00086"/>
</dbReference>
<dbReference type="UniPathway" id="UPA00053">
    <property type="reaction ID" value="UER00087"/>
</dbReference>
<dbReference type="UniPathway" id="UPA00053">
    <property type="reaction ID" value="UER00088"/>
</dbReference>
<dbReference type="UniPathway" id="UPA00053">
    <property type="reaction ID" value="UER00089"/>
</dbReference>
<dbReference type="Proteomes" id="UP000008837">
    <property type="component" value="Unassembled WGS sequence"/>
</dbReference>
<dbReference type="GO" id="GO:0005737">
    <property type="term" value="C:cytoplasm"/>
    <property type="evidence" value="ECO:0007669"/>
    <property type="project" value="UniProtKB-SubCell"/>
</dbReference>
<dbReference type="GO" id="GO:0003855">
    <property type="term" value="F:3-dehydroquinate dehydratase activity"/>
    <property type="evidence" value="ECO:0007669"/>
    <property type="project" value="UniProtKB-UniRule"/>
</dbReference>
<dbReference type="GO" id="GO:0003856">
    <property type="term" value="F:3-dehydroquinate synthase activity"/>
    <property type="evidence" value="ECO:0007669"/>
    <property type="project" value="UniProtKB-UniRule"/>
</dbReference>
<dbReference type="GO" id="GO:0003866">
    <property type="term" value="F:3-phosphoshikimate 1-carboxyvinyltransferase activity"/>
    <property type="evidence" value="ECO:0007669"/>
    <property type="project" value="UniProtKB-UniRule"/>
</dbReference>
<dbReference type="GO" id="GO:0005524">
    <property type="term" value="F:ATP binding"/>
    <property type="evidence" value="ECO:0007669"/>
    <property type="project" value="UniProtKB-UniRule"/>
</dbReference>
<dbReference type="GO" id="GO:0046872">
    <property type="term" value="F:metal ion binding"/>
    <property type="evidence" value="ECO:0007669"/>
    <property type="project" value="UniProtKB-UniRule"/>
</dbReference>
<dbReference type="GO" id="GO:0004764">
    <property type="term" value="F:shikimate 3-dehydrogenase (NADP+) activity"/>
    <property type="evidence" value="ECO:0007669"/>
    <property type="project" value="UniProtKB-UniRule"/>
</dbReference>
<dbReference type="GO" id="GO:0004765">
    <property type="term" value="F:shikimate kinase activity"/>
    <property type="evidence" value="ECO:0007669"/>
    <property type="project" value="UniProtKB-UniRule"/>
</dbReference>
<dbReference type="GO" id="GO:0008652">
    <property type="term" value="P:amino acid biosynthetic process"/>
    <property type="evidence" value="ECO:0007669"/>
    <property type="project" value="UniProtKB-KW"/>
</dbReference>
<dbReference type="GO" id="GO:0009073">
    <property type="term" value="P:aromatic amino acid family biosynthetic process"/>
    <property type="evidence" value="ECO:0007669"/>
    <property type="project" value="UniProtKB-UniRule"/>
</dbReference>
<dbReference type="GO" id="GO:0009423">
    <property type="term" value="P:chorismate biosynthetic process"/>
    <property type="evidence" value="ECO:0007669"/>
    <property type="project" value="UniProtKB-UniRule"/>
</dbReference>
<dbReference type="CDD" id="cd00502">
    <property type="entry name" value="DHQase_I"/>
    <property type="match status" value="1"/>
</dbReference>
<dbReference type="CDD" id="cd08195">
    <property type="entry name" value="DHQS"/>
    <property type="match status" value="1"/>
</dbReference>
<dbReference type="CDD" id="cd01556">
    <property type="entry name" value="EPSP_synthase"/>
    <property type="match status" value="1"/>
</dbReference>
<dbReference type="CDD" id="cd01065">
    <property type="entry name" value="NAD_bind_Shikimate_DH"/>
    <property type="match status" value="1"/>
</dbReference>
<dbReference type="CDD" id="cd00464">
    <property type="entry name" value="SK"/>
    <property type="match status" value="1"/>
</dbReference>
<dbReference type="FunFam" id="1.20.1090.10:FF:000007">
    <property type="entry name" value="Pentafunctional AROM polypeptide"/>
    <property type="match status" value="1"/>
</dbReference>
<dbReference type="FunFam" id="3.20.20.70:FF:000135">
    <property type="entry name" value="Pentafunctional AROM polypeptide"/>
    <property type="match status" value="1"/>
</dbReference>
<dbReference type="FunFam" id="3.40.50.1970:FF:000007">
    <property type="entry name" value="Pentafunctional AROM polypeptide"/>
    <property type="match status" value="1"/>
</dbReference>
<dbReference type="FunFam" id="3.65.10.10:FF:000007">
    <property type="entry name" value="Pentafunctional AROM polypeptide"/>
    <property type="match status" value="1"/>
</dbReference>
<dbReference type="Gene3D" id="3.40.50.1970">
    <property type="match status" value="1"/>
</dbReference>
<dbReference type="Gene3D" id="3.20.20.70">
    <property type="entry name" value="Aldolase class I"/>
    <property type="match status" value="1"/>
</dbReference>
<dbReference type="Gene3D" id="1.20.1090.10">
    <property type="entry name" value="Dehydroquinate synthase-like - alpha domain"/>
    <property type="match status" value="1"/>
</dbReference>
<dbReference type="Gene3D" id="3.65.10.10">
    <property type="entry name" value="Enolpyruvate transferase domain"/>
    <property type="match status" value="2"/>
</dbReference>
<dbReference type="Gene3D" id="3.40.50.10860">
    <property type="entry name" value="Leucine Dehydrogenase, chain A, domain 1"/>
    <property type="match status" value="1"/>
</dbReference>
<dbReference type="Gene3D" id="3.40.50.720">
    <property type="entry name" value="NAD(P)-binding Rossmann-like Domain"/>
    <property type="match status" value="1"/>
</dbReference>
<dbReference type="Gene3D" id="3.40.50.300">
    <property type="entry name" value="P-loop containing nucleotide triphosphate hydrolases"/>
    <property type="match status" value="1"/>
</dbReference>
<dbReference type="HAMAP" id="MF_00210">
    <property type="entry name" value="EPSP_synth"/>
    <property type="match status" value="1"/>
</dbReference>
<dbReference type="HAMAP" id="MF_03143">
    <property type="entry name" value="Pentafunct_AroM"/>
    <property type="match status" value="1"/>
</dbReference>
<dbReference type="HAMAP" id="MF_00109">
    <property type="entry name" value="Shikimate_kinase"/>
    <property type="match status" value="1"/>
</dbReference>
<dbReference type="InterPro" id="IPR013785">
    <property type="entry name" value="Aldolase_TIM"/>
</dbReference>
<dbReference type="InterPro" id="IPR046346">
    <property type="entry name" value="Aminoacid_DH-like_N_sf"/>
</dbReference>
<dbReference type="InterPro" id="IPR016037">
    <property type="entry name" value="DHQ_synth_AroB"/>
</dbReference>
<dbReference type="InterPro" id="IPR030960">
    <property type="entry name" value="DHQS/DOIS_N"/>
</dbReference>
<dbReference type="InterPro" id="IPR056179">
    <property type="entry name" value="DHQS_C"/>
</dbReference>
<dbReference type="InterPro" id="IPR001381">
    <property type="entry name" value="DHquinase_I"/>
</dbReference>
<dbReference type="InterPro" id="IPR001986">
    <property type="entry name" value="Enolpyruvate_Tfrase_dom"/>
</dbReference>
<dbReference type="InterPro" id="IPR036968">
    <property type="entry name" value="Enolpyruvate_Tfrase_sf"/>
</dbReference>
<dbReference type="InterPro" id="IPR006264">
    <property type="entry name" value="EPSP_synthase"/>
</dbReference>
<dbReference type="InterPro" id="IPR023193">
    <property type="entry name" value="EPSP_synthase_CS"/>
</dbReference>
<dbReference type="InterPro" id="IPR036291">
    <property type="entry name" value="NAD(P)-bd_dom_sf"/>
</dbReference>
<dbReference type="InterPro" id="IPR027417">
    <property type="entry name" value="P-loop_NTPase"/>
</dbReference>
<dbReference type="InterPro" id="IPR008289">
    <property type="entry name" value="Pentafunct_AroM"/>
</dbReference>
<dbReference type="InterPro" id="IPR013792">
    <property type="entry name" value="RNA3'P_cycl/enolpyr_Trfase_a/b"/>
</dbReference>
<dbReference type="InterPro" id="IPR041121">
    <property type="entry name" value="SDH_C"/>
</dbReference>
<dbReference type="InterPro" id="IPR031322">
    <property type="entry name" value="Shikimate/glucono_kinase"/>
</dbReference>
<dbReference type="InterPro" id="IPR013708">
    <property type="entry name" value="Shikimate_DH-bd_N"/>
</dbReference>
<dbReference type="InterPro" id="IPR010110">
    <property type="entry name" value="Shikimate_DH_AroM-type"/>
</dbReference>
<dbReference type="InterPro" id="IPR000623">
    <property type="entry name" value="Shikimate_kinase/TSH1"/>
</dbReference>
<dbReference type="InterPro" id="IPR023000">
    <property type="entry name" value="Shikimate_kinase_CS"/>
</dbReference>
<dbReference type="InterPro" id="IPR006151">
    <property type="entry name" value="Shikm_DH/Glu-tRNA_Rdtase"/>
</dbReference>
<dbReference type="NCBIfam" id="TIGR01356">
    <property type="entry name" value="aroA"/>
    <property type="match status" value="1"/>
</dbReference>
<dbReference type="NCBIfam" id="TIGR01357">
    <property type="entry name" value="aroB"/>
    <property type="match status" value="1"/>
</dbReference>
<dbReference type="NCBIfam" id="TIGR01093">
    <property type="entry name" value="aroD"/>
    <property type="match status" value="1"/>
</dbReference>
<dbReference type="NCBIfam" id="TIGR01809">
    <property type="entry name" value="Shik-DH-AROM"/>
    <property type="match status" value="1"/>
</dbReference>
<dbReference type="PANTHER" id="PTHR21090">
    <property type="entry name" value="AROM/DEHYDROQUINATE SYNTHASE"/>
    <property type="match status" value="1"/>
</dbReference>
<dbReference type="PANTHER" id="PTHR21090:SF5">
    <property type="entry name" value="PENTAFUNCTIONAL AROM POLYPEPTIDE"/>
    <property type="match status" value="1"/>
</dbReference>
<dbReference type="Pfam" id="PF01761">
    <property type="entry name" value="DHQ_synthase"/>
    <property type="match status" value="1"/>
</dbReference>
<dbReference type="Pfam" id="PF24621">
    <property type="entry name" value="DHQS_C"/>
    <property type="match status" value="1"/>
</dbReference>
<dbReference type="Pfam" id="PF01487">
    <property type="entry name" value="DHquinase_I"/>
    <property type="match status" value="1"/>
</dbReference>
<dbReference type="Pfam" id="PF00275">
    <property type="entry name" value="EPSP_synthase"/>
    <property type="match status" value="1"/>
</dbReference>
<dbReference type="Pfam" id="PF18317">
    <property type="entry name" value="SDH_C"/>
    <property type="match status" value="1"/>
</dbReference>
<dbReference type="Pfam" id="PF01488">
    <property type="entry name" value="Shikimate_DH"/>
    <property type="match status" value="1"/>
</dbReference>
<dbReference type="Pfam" id="PF08501">
    <property type="entry name" value="Shikimate_dh_N"/>
    <property type="match status" value="1"/>
</dbReference>
<dbReference type="Pfam" id="PF01202">
    <property type="entry name" value="SKI"/>
    <property type="match status" value="1"/>
</dbReference>
<dbReference type="PIRSF" id="PIRSF000514">
    <property type="entry name" value="Pentafunct_AroM"/>
    <property type="match status" value="1"/>
</dbReference>
<dbReference type="PRINTS" id="PR01100">
    <property type="entry name" value="SHIKIMTKNASE"/>
</dbReference>
<dbReference type="SUPFAM" id="SSF51569">
    <property type="entry name" value="Aldolase"/>
    <property type="match status" value="1"/>
</dbReference>
<dbReference type="SUPFAM" id="SSF53223">
    <property type="entry name" value="Aminoacid dehydrogenase-like, N-terminal domain"/>
    <property type="match status" value="1"/>
</dbReference>
<dbReference type="SUPFAM" id="SSF56796">
    <property type="entry name" value="Dehydroquinate synthase-like"/>
    <property type="match status" value="1"/>
</dbReference>
<dbReference type="SUPFAM" id="SSF55205">
    <property type="entry name" value="EPT/RTPC-like"/>
    <property type="match status" value="1"/>
</dbReference>
<dbReference type="SUPFAM" id="SSF51735">
    <property type="entry name" value="NAD(P)-binding Rossmann-fold domains"/>
    <property type="match status" value="1"/>
</dbReference>
<dbReference type="SUPFAM" id="SSF52540">
    <property type="entry name" value="P-loop containing nucleoside triphosphate hydrolases"/>
    <property type="match status" value="1"/>
</dbReference>
<dbReference type="PROSITE" id="PS00104">
    <property type="entry name" value="EPSP_SYNTHASE_1"/>
    <property type="match status" value="1"/>
</dbReference>
<dbReference type="PROSITE" id="PS00885">
    <property type="entry name" value="EPSP_SYNTHASE_2"/>
    <property type="match status" value="1"/>
</dbReference>
<dbReference type="PROSITE" id="PS01128">
    <property type="entry name" value="SHIKIMATE_KINASE"/>
    <property type="match status" value="1"/>
</dbReference>
<evidence type="ECO:0000255" key="1">
    <source>
        <dbReference type="HAMAP-Rule" id="MF_03143"/>
    </source>
</evidence>
<sequence length="1611" mass="173022">MSQVSGGKVPSYHAPPFDSPLSGATIHELRCLDTKVQLGFHLVPHIAKTLITELPSSAYVLVTDTNLAKLGAIDKFRKAFEAIPGARLLVYELAPGEESKSRETKAAIEDWMLEHRLTRDTVVLACGGGVIGDLVGFVAATFMRGLKYVQIPTTLLAMVDSSVGGKTAIDHPHGKNLIGAFHQPRYVFIDAAWLLTLPEREFSNGMAEVIKTAAIWDAADFEKLESESASIRAAVMGDEARQQSAAQGHTLATRTSSQSLLLDVIRGSVGVKAHIVTIDEKETGLRNLVNFGHSVGHAIEAVLTPDILHGECVAVGMVLEAEIARLVHGLPQVAIGRLVRCLRLYNLPVTLADARIMALSKVRELTTARVLDIMRVDKKNAGAQKKIVLLSRIGATVEERASTVSDAMIERVLAPAMLVRESVSAPRPPLTIHTPGSKSVSNRALVLAALSGGTCRLRHLLHSDDTQVMMQALAQLRAADFAWEDNGATLVVHGQGGRVLASDEPVYLQNAGTAARFVTAVACLASSASCSGSDESSCHGVVHLTGNARMKQRPIGPLVDALRSNGARIDYVEQSNCLPLNVTASGALQGGRIELAADVSSQYVSAVLLCAPYAQNDVELALVGGKVISQPYIDMTIAMMQSFGVRVERVAEHVYRIPRTTYVAPSTYEVECDASSATYPLAIAAITGTTVTVPSLGRASLQGDAAFARKVLAPMGCQVEQNDVSTTVTGPPVGMLKALGAIDMESMTDAFITAAMLFAVATAPCDEYASSSTSASPSSTRITGIANQRVKECDRLRAVVTELAKLGVRAVEHDDGIEVFSTPISQLLPHASIYCYDDHRIAMAFSVLACVVPGAGTEIQEKRCVEKTWPSWWDVLGGPLNVPIAGARLNDALVSLVARSRQRGPPTPTTLYGRDASIVLIGMRASGKSHVGRSLAKLLHRTFVDADVVFSDMYDIGAFVQDHGWDAFRAEESRILESLLTQCSVGHVIALGGGVIESAASRALLARFREHVGPVVHIVRDFALIESFLATSDRPAYGEPLADVYARRLPLYAESSCMEAVNTGNDAALALSRQLRTPLGTPVPISPAFFLSLTFPRVQDAWSILDHASAGVDVLELRVDLLHADGQPSIDDVREQVALLRQYTSLPILYTVRSVSQGGRLPDEANEAYFALTRLGLRMGCEYVDIELTRPSDGIEELAQAKGQTRIVASFHDTSGTMHWMAPAMRRLYTRACVLGDIAKLVGFARTWQDSLDLESFRTRVAQEAPFPLIAINMQAAGQLSRIVNPLLTPVTHPALPVPAAPGQMSVRDIHHARHLLGLLPKRHFFLFGSPITHSQSPLIHNTAFELLGLPHVYARHETDSVDASVEALVRAGDFGGASVTIPHKLSIMQLLDSVSPHAQVIGAVNTIVPHRDETTGHMALHGENTDWRAIVDLVAKHDGGRTRACTALVIGAGGSARAALYAMHKLGASRILLYNRTFEKAVNLAEQVPVEWRVEPVDSLALAAKAKPNVIVSNVPAQGTSFTPGGADIVLPLDLLSSDGGVAIDMAYRPEITPLLTLAQQHQSWHGVRGIEILLAQAFHQFRLWTGLPPPCLDIETTVYAAYRAAAASM</sequence>
<feature type="chain" id="PRO_0000406723" description="Pentafunctional AROM polypeptide">
    <location>
        <begin position="1"/>
        <end position="1611"/>
    </location>
</feature>
<feature type="region of interest" description="3-dehydroquinate synthase">
    <location>
        <begin position="1"/>
        <end position="406"/>
    </location>
</feature>
<feature type="region of interest" description="EPSP synthase">
    <location>
        <begin position="419"/>
        <end position="882"/>
    </location>
</feature>
<feature type="region of interest" description="Shikimate kinase">
    <location>
        <begin position="915"/>
        <end position="1092"/>
    </location>
</feature>
<feature type="region of interest" description="3-dehydroquinase">
    <location>
        <begin position="1093"/>
        <end position="1309"/>
    </location>
</feature>
<feature type="region of interest" description="Shikimate dehydrogenase">
    <location>
        <begin position="1322"/>
        <end position="1611"/>
    </location>
</feature>
<feature type="active site" description="Proton acceptor; for 3-dehydroquinate synthase activity" evidence="1">
    <location>
        <position position="282"/>
    </location>
</feature>
<feature type="active site" description="Proton acceptor; for 3-dehydroquinate synthase activity" evidence="1">
    <location>
        <position position="297"/>
    </location>
</feature>
<feature type="active site" description="For EPSP synthase activity" evidence="1">
    <location>
        <position position="864"/>
    </location>
</feature>
<feature type="active site" description="Proton acceptor; for 3-dehydroquinate dehydratase activity" evidence="1">
    <location>
        <position position="1212"/>
    </location>
</feature>
<feature type="active site" description="Schiff-base intermediate with substrate; for 3-dehydroquinate dehydratase activity" evidence="1">
    <location>
        <position position="1240"/>
    </location>
</feature>
<feature type="binding site" evidence="1">
    <location>
        <begin position="64"/>
        <end position="66"/>
    </location>
    <ligand>
        <name>NAD(+)</name>
        <dbReference type="ChEBI" id="CHEBI:57540"/>
    </ligand>
</feature>
<feature type="binding site" evidence="1">
    <location>
        <begin position="97"/>
        <end position="100"/>
    </location>
    <ligand>
        <name>NAD(+)</name>
        <dbReference type="ChEBI" id="CHEBI:57540"/>
    </ligand>
</feature>
<feature type="binding site" evidence="1">
    <location>
        <begin position="128"/>
        <end position="130"/>
    </location>
    <ligand>
        <name>NAD(+)</name>
        <dbReference type="ChEBI" id="CHEBI:57540"/>
    </ligand>
</feature>
<feature type="binding site" evidence="1">
    <location>
        <position position="133"/>
    </location>
    <ligand>
        <name>NAD(+)</name>
        <dbReference type="ChEBI" id="CHEBI:57540"/>
    </ligand>
</feature>
<feature type="binding site" evidence="1">
    <location>
        <position position="144"/>
    </location>
    <ligand>
        <name>7-phospho-2-dehydro-3-deoxy-D-arabino-heptonate</name>
        <dbReference type="ChEBI" id="CHEBI:58394"/>
    </ligand>
</feature>
<feature type="binding site" evidence="1">
    <location>
        <begin position="153"/>
        <end position="154"/>
    </location>
    <ligand>
        <name>NAD(+)</name>
        <dbReference type="ChEBI" id="CHEBI:57540"/>
    </ligand>
</feature>
<feature type="binding site" evidence="1">
    <location>
        <position position="160"/>
    </location>
    <ligand>
        <name>7-phospho-2-dehydro-3-deoxy-D-arabino-heptonate</name>
        <dbReference type="ChEBI" id="CHEBI:58394"/>
    </ligand>
</feature>
<feature type="binding site" evidence="1">
    <location>
        <position position="166"/>
    </location>
    <ligand>
        <name>7-phospho-2-dehydro-3-deoxy-D-arabino-heptonate</name>
        <dbReference type="ChEBI" id="CHEBI:58394"/>
    </ligand>
</feature>
<feature type="binding site" evidence="1">
    <location>
        <position position="175"/>
    </location>
    <ligand>
        <name>NAD(+)</name>
        <dbReference type="ChEBI" id="CHEBI:57540"/>
    </ligand>
</feature>
<feature type="binding site" evidence="1">
    <location>
        <position position="176"/>
    </location>
    <ligand>
        <name>7-phospho-2-dehydro-3-deoxy-D-arabino-heptonate</name>
        <dbReference type="ChEBI" id="CHEBI:58394"/>
    </ligand>
</feature>
<feature type="binding site" evidence="1">
    <location>
        <begin position="193"/>
        <end position="196"/>
    </location>
    <ligand>
        <name>NAD(+)</name>
        <dbReference type="ChEBI" id="CHEBI:57540"/>
    </ligand>
</feature>
<feature type="binding site" evidence="1">
    <location>
        <position position="204"/>
    </location>
    <ligand>
        <name>NAD(+)</name>
        <dbReference type="ChEBI" id="CHEBI:57540"/>
    </ligand>
</feature>
<feature type="binding site" evidence="1">
    <location>
        <begin position="208"/>
        <end position="211"/>
    </location>
    <ligand>
        <name>7-phospho-2-dehydro-3-deoxy-D-arabino-heptonate</name>
        <dbReference type="ChEBI" id="CHEBI:58394"/>
    </ligand>
</feature>
<feature type="binding site" evidence="1">
    <location>
        <position position="208"/>
    </location>
    <ligand>
        <name>Zn(2+)</name>
        <dbReference type="ChEBI" id="CHEBI:29105"/>
        <note>catalytic</note>
    </ligand>
</feature>
<feature type="binding site" evidence="1">
    <location>
        <position position="272"/>
    </location>
    <ligand>
        <name>7-phospho-2-dehydro-3-deoxy-D-arabino-heptonate</name>
        <dbReference type="ChEBI" id="CHEBI:58394"/>
    </ligand>
</feature>
<feature type="binding site" evidence="1">
    <location>
        <begin position="286"/>
        <end position="290"/>
    </location>
    <ligand>
        <name>7-phospho-2-dehydro-3-deoxy-D-arabino-heptonate</name>
        <dbReference type="ChEBI" id="CHEBI:58394"/>
    </ligand>
</feature>
<feature type="binding site" evidence="1">
    <location>
        <position position="293"/>
    </location>
    <ligand>
        <name>7-phospho-2-dehydro-3-deoxy-D-arabino-heptonate</name>
        <dbReference type="ChEBI" id="CHEBI:58394"/>
    </ligand>
</feature>
<feature type="binding site" evidence="1">
    <location>
        <position position="293"/>
    </location>
    <ligand>
        <name>Zn(2+)</name>
        <dbReference type="ChEBI" id="CHEBI:29105"/>
        <note>catalytic</note>
    </ligand>
</feature>
<feature type="binding site" evidence="1">
    <location>
        <position position="309"/>
    </location>
    <ligand>
        <name>7-phospho-2-dehydro-3-deoxy-D-arabino-heptonate</name>
        <dbReference type="ChEBI" id="CHEBI:58394"/>
    </ligand>
</feature>
<feature type="binding site" evidence="1">
    <location>
        <position position="309"/>
    </location>
    <ligand>
        <name>Zn(2+)</name>
        <dbReference type="ChEBI" id="CHEBI:29105"/>
        <note>catalytic</note>
    </ligand>
</feature>
<feature type="binding site" evidence="1">
    <location>
        <position position="378"/>
    </location>
    <ligand>
        <name>7-phospho-2-dehydro-3-deoxy-D-arabino-heptonate</name>
        <dbReference type="ChEBI" id="CHEBI:58394"/>
    </ligand>
</feature>
<feature type="binding site" evidence="1">
    <location>
        <begin position="922"/>
        <end position="929"/>
    </location>
    <ligand>
        <name>ATP</name>
        <dbReference type="ChEBI" id="CHEBI:30616"/>
    </ligand>
</feature>
<gene>
    <name type="ORF">MGL_3989</name>
</gene>
<reference key="1">
    <citation type="journal article" date="2007" name="Proc. Natl. Acad. Sci. U.S.A.">
        <title>Dandruff-associated Malassezia genomes reveal convergent and divergent virulence traits shared with plant and human fungal pathogens.</title>
        <authorList>
            <person name="Xu J."/>
            <person name="Saunders C.W."/>
            <person name="Hu P."/>
            <person name="Grant R.A."/>
            <person name="Boekhout T."/>
            <person name="Kuramae E.E."/>
            <person name="Kronstad J.W."/>
            <person name="DeAngelis Y.M."/>
            <person name="Reeder N.L."/>
            <person name="Johnstone K.R."/>
            <person name="Leland M."/>
            <person name="Fieno A.M."/>
            <person name="Begley W.M."/>
            <person name="Sun Y."/>
            <person name="Lacey M.P."/>
            <person name="Chaudhary T."/>
            <person name="Keough T."/>
            <person name="Chu L."/>
            <person name="Sears R."/>
            <person name="Yuan B."/>
            <person name="Dawson T.L. Jr."/>
        </authorList>
    </citation>
    <scope>NUCLEOTIDE SEQUENCE [LARGE SCALE GENOMIC DNA]</scope>
    <source>
        <strain>ATCC MYA-4612 / CBS 7966</strain>
    </source>
</reference>
<protein>
    <recommendedName>
        <fullName evidence="1">Pentafunctional AROM polypeptide</fullName>
    </recommendedName>
    <domain>
        <recommendedName>
            <fullName evidence="1">3-dehydroquinate synthase</fullName>
            <shortName evidence="1">DHQS</shortName>
            <ecNumber evidence="1">4.2.3.4</ecNumber>
        </recommendedName>
    </domain>
    <domain>
        <recommendedName>
            <fullName evidence="1">3-phosphoshikimate 1-carboxyvinyltransferase</fullName>
            <ecNumber evidence="1">2.5.1.19</ecNumber>
        </recommendedName>
        <alternativeName>
            <fullName evidence="1">5-enolpyruvylshikimate-3-phosphate synthase</fullName>
            <shortName evidence="1">EPSP synthase</shortName>
            <shortName evidence="1">EPSPS</shortName>
        </alternativeName>
    </domain>
    <domain>
        <recommendedName>
            <fullName evidence="1">Shikimate kinase</fullName>
            <shortName evidence="1">SK</shortName>
            <ecNumber evidence="1">2.7.1.71</ecNumber>
        </recommendedName>
    </domain>
    <domain>
        <recommendedName>
            <fullName evidence="1">3-dehydroquinate dehydratase</fullName>
            <shortName evidence="1">3-dehydroquinase</shortName>
            <ecNumber evidence="1">4.2.1.10</ecNumber>
        </recommendedName>
    </domain>
    <domain>
        <recommendedName>
            <fullName evidence="1">Shikimate dehydrogenase</fullName>
            <ecNumber evidence="1">1.1.1.25</ecNumber>
        </recommendedName>
    </domain>
</protein>
<accession>A8QCB2</accession>
<proteinExistence type="inferred from homology"/>
<comment type="function">
    <text evidence="1">The AROM polypeptide catalyzes 5 consecutive enzymatic reactions in prechorismate polyaromatic amino acid biosynthesis.</text>
</comment>
<comment type="catalytic activity">
    <reaction evidence="1">
        <text>7-phospho-2-dehydro-3-deoxy-D-arabino-heptonate = 3-dehydroquinate + phosphate</text>
        <dbReference type="Rhea" id="RHEA:21968"/>
        <dbReference type="ChEBI" id="CHEBI:32364"/>
        <dbReference type="ChEBI" id="CHEBI:43474"/>
        <dbReference type="ChEBI" id="CHEBI:58394"/>
        <dbReference type="EC" id="4.2.3.4"/>
    </reaction>
</comment>
<comment type="catalytic activity">
    <reaction evidence="1">
        <text>3-dehydroquinate = 3-dehydroshikimate + H2O</text>
        <dbReference type="Rhea" id="RHEA:21096"/>
        <dbReference type="ChEBI" id="CHEBI:15377"/>
        <dbReference type="ChEBI" id="CHEBI:16630"/>
        <dbReference type="ChEBI" id="CHEBI:32364"/>
        <dbReference type="EC" id="4.2.1.10"/>
    </reaction>
</comment>
<comment type="catalytic activity">
    <reaction evidence="1">
        <text>shikimate + NADP(+) = 3-dehydroshikimate + NADPH + H(+)</text>
        <dbReference type="Rhea" id="RHEA:17737"/>
        <dbReference type="ChEBI" id="CHEBI:15378"/>
        <dbReference type="ChEBI" id="CHEBI:16630"/>
        <dbReference type="ChEBI" id="CHEBI:36208"/>
        <dbReference type="ChEBI" id="CHEBI:57783"/>
        <dbReference type="ChEBI" id="CHEBI:58349"/>
        <dbReference type="EC" id="1.1.1.25"/>
    </reaction>
</comment>
<comment type="catalytic activity">
    <reaction evidence="1">
        <text>shikimate + ATP = 3-phosphoshikimate + ADP + H(+)</text>
        <dbReference type="Rhea" id="RHEA:13121"/>
        <dbReference type="ChEBI" id="CHEBI:15378"/>
        <dbReference type="ChEBI" id="CHEBI:30616"/>
        <dbReference type="ChEBI" id="CHEBI:36208"/>
        <dbReference type="ChEBI" id="CHEBI:145989"/>
        <dbReference type="ChEBI" id="CHEBI:456216"/>
        <dbReference type="EC" id="2.7.1.71"/>
    </reaction>
</comment>
<comment type="catalytic activity">
    <reaction evidence="1">
        <text>3-phosphoshikimate + phosphoenolpyruvate = 5-O-(1-carboxyvinyl)-3-phosphoshikimate + phosphate</text>
        <dbReference type="Rhea" id="RHEA:21256"/>
        <dbReference type="ChEBI" id="CHEBI:43474"/>
        <dbReference type="ChEBI" id="CHEBI:57701"/>
        <dbReference type="ChEBI" id="CHEBI:58702"/>
        <dbReference type="ChEBI" id="CHEBI:145989"/>
        <dbReference type="EC" id="2.5.1.19"/>
    </reaction>
</comment>
<comment type="cofactor">
    <cofactor>
        <name>Zn(2+)</name>
        <dbReference type="ChEBI" id="CHEBI:29105"/>
    </cofactor>
    <text>Binds 2 Zn(2+) ions per subunit.</text>
</comment>
<comment type="pathway">
    <text evidence="1">Metabolic intermediate biosynthesis; chorismate biosynthesis; chorismate from D-erythrose 4-phosphate and phosphoenolpyruvate: step 2/7.</text>
</comment>
<comment type="pathway">
    <text evidence="1">Metabolic intermediate biosynthesis; chorismate biosynthesis; chorismate from D-erythrose 4-phosphate and phosphoenolpyruvate: step 3/7.</text>
</comment>
<comment type="pathway">
    <text evidence="1">Metabolic intermediate biosynthesis; chorismate biosynthesis; chorismate from D-erythrose 4-phosphate and phosphoenolpyruvate: step 4/7.</text>
</comment>
<comment type="pathway">
    <text evidence="1">Metabolic intermediate biosynthesis; chorismate biosynthesis; chorismate from D-erythrose 4-phosphate and phosphoenolpyruvate: step 5/7.</text>
</comment>
<comment type="pathway">
    <text evidence="1">Metabolic intermediate biosynthesis; chorismate biosynthesis; chorismate from D-erythrose 4-phosphate and phosphoenolpyruvate: step 6/7.</text>
</comment>
<comment type="subunit">
    <text evidence="1">Homodimer.</text>
</comment>
<comment type="subcellular location">
    <subcellularLocation>
        <location evidence="1">Cytoplasm</location>
    </subcellularLocation>
</comment>
<comment type="similarity">
    <text evidence="1">In the N-terminal section; belongs to the sugar phosphate cyclases superfamily. Dehydroquinate synthase family.</text>
</comment>
<comment type="similarity">
    <text evidence="1">In the 2nd section; belongs to the EPSP synthase family.</text>
</comment>
<comment type="similarity">
    <text evidence="1">In the 3rd section; belongs to the shikimate kinase family.</text>
</comment>
<comment type="similarity">
    <text evidence="1">In the 4th section; belongs to the type-I 3-dehydroquinase family.</text>
</comment>
<comment type="similarity">
    <text evidence="1">In the C-terminal section; belongs to the shikimate dehydrogenase family.</text>
</comment>
<organism>
    <name type="scientific">Malassezia globosa (strain ATCC MYA-4612 / CBS 7966)</name>
    <name type="common">Dandruff-associated fungus</name>
    <dbReference type="NCBI Taxonomy" id="425265"/>
    <lineage>
        <taxon>Eukaryota</taxon>
        <taxon>Fungi</taxon>
        <taxon>Dikarya</taxon>
        <taxon>Basidiomycota</taxon>
        <taxon>Ustilaginomycotina</taxon>
        <taxon>Malasseziomycetes</taxon>
        <taxon>Malasseziales</taxon>
        <taxon>Malasseziaceae</taxon>
        <taxon>Malassezia</taxon>
    </lineage>
</organism>
<keyword id="KW-0028">Amino-acid biosynthesis</keyword>
<keyword id="KW-0057">Aromatic amino acid biosynthesis</keyword>
<keyword id="KW-0067">ATP-binding</keyword>
<keyword id="KW-0963">Cytoplasm</keyword>
<keyword id="KW-0418">Kinase</keyword>
<keyword id="KW-0456">Lyase</keyword>
<keyword id="KW-0479">Metal-binding</keyword>
<keyword id="KW-0511">Multifunctional enzyme</keyword>
<keyword id="KW-0521">NADP</keyword>
<keyword id="KW-0547">Nucleotide-binding</keyword>
<keyword id="KW-0560">Oxidoreductase</keyword>
<keyword id="KW-1185">Reference proteome</keyword>
<keyword id="KW-0808">Transferase</keyword>
<keyword id="KW-0862">Zinc</keyword>
<name>ARO1_MALGO</name>